<keyword id="KW-1064">Adaptive immunity</keyword>
<keyword id="KW-1003">Cell membrane</keyword>
<keyword id="KW-1015">Disulfide bond</keyword>
<keyword id="KW-0967">Endosome</keyword>
<keyword id="KW-0325">Glycoprotein</keyword>
<keyword id="KW-0391">Immunity</keyword>
<keyword id="KW-0393">Immunoglobulin domain</keyword>
<keyword id="KW-0458">Lysosome</keyword>
<keyword id="KW-0472">Membrane</keyword>
<keyword id="KW-1185">Reference proteome</keyword>
<keyword id="KW-0732">Signal</keyword>
<keyword id="KW-0812">Transmembrane</keyword>
<keyword id="KW-1133">Transmembrane helix</keyword>
<name>CD1B2_CAVPO</name>
<dbReference type="EMBL" id="AF145484">
    <property type="protein sequence ID" value="AAF12739.1"/>
    <property type="molecule type" value="mRNA"/>
</dbReference>
<dbReference type="RefSeq" id="NP_001166321.1">
    <property type="nucleotide sequence ID" value="NM_001172850.1"/>
</dbReference>
<dbReference type="SMR" id="Q9QZZ1"/>
<dbReference type="STRING" id="10141.ENSCPOP00000020657"/>
<dbReference type="GlyCosmos" id="Q9QZZ1">
    <property type="glycosylation" value="4 sites, No reported glycans"/>
</dbReference>
<dbReference type="GeneID" id="100379550"/>
<dbReference type="KEGG" id="cpoc:100379550"/>
<dbReference type="CTD" id="100056393"/>
<dbReference type="eggNOG" id="ENOG502SJH6">
    <property type="taxonomic scope" value="Eukaryota"/>
</dbReference>
<dbReference type="InParanoid" id="Q9QZZ1"/>
<dbReference type="OrthoDB" id="8890485at2759"/>
<dbReference type="Proteomes" id="UP000005447">
    <property type="component" value="Unassembled WGS sequence"/>
</dbReference>
<dbReference type="GO" id="GO:0010008">
    <property type="term" value="C:endosome membrane"/>
    <property type="evidence" value="ECO:0007669"/>
    <property type="project" value="UniProtKB-SubCell"/>
</dbReference>
<dbReference type="GO" id="GO:0009897">
    <property type="term" value="C:external side of plasma membrane"/>
    <property type="evidence" value="ECO:0007669"/>
    <property type="project" value="TreeGrafter"/>
</dbReference>
<dbReference type="GO" id="GO:0005615">
    <property type="term" value="C:extracellular space"/>
    <property type="evidence" value="ECO:0007669"/>
    <property type="project" value="TreeGrafter"/>
</dbReference>
<dbReference type="GO" id="GO:0005765">
    <property type="term" value="C:lysosomal membrane"/>
    <property type="evidence" value="ECO:0007669"/>
    <property type="project" value="UniProtKB-SubCell"/>
</dbReference>
<dbReference type="GO" id="GO:0030883">
    <property type="term" value="F:endogenous lipid antigen binding"/>
    <property type="evidence" value="ECO:0007669"/>
    <property type="project" value="TreeGrafter"/>
</dbReference>
<dbReference type="GO" id="GO:0030884">
    <property type="term" value="F:exogenous lipid antigen binding"/>
    <property type="evidence" value="ECO:0007669"/>
    <property type="project" value="TreeGrafter"/>
</dbReference>
<dbReference type="GO" id="GO:0071723">
    <property type="term" value="F:lipopeptide binding"/>
    <property type="evidence" value="ECO:0007669"/>
    <property type="project" value="TreeGrafter"/>
</dbReference>
<dbReference type="GO" id="GO:0002250">
    <property type="term" value="P:adaptive immune response"/>
    <property type="evidence" value="ECO:0007669"/>
    <property type="project" value="UniProtKB-KW"/>
</dbReference>
<dbReference type="GO" id="GO:0048006">
    <property type="term" value="P:antigen processing and presentation, endogenous lipid antigen via MHC class Ib"/>
    <property type="evidence" value="ECO:0007669"/>
    <property type="project" value="TreeGrafter"/>
</dbReference>
<dbReference type="GO" id="GO:0048007">
    <property type="term" value="P:antigen processing and presentation, exogenous lipid antigen via MHC class Ib"/>
    <property type="evidence" value="ECO:0007669"/>
    <property type="project" value="TreeGrafter"/>
</dbReference>
<dbReference type="GO" id="GO:0001916">
    <property type="term" value="P:positive regulation of T cell mediated cytotoxicity"/>
    <property type="evidence" value="ECO:0007669"/>
    <property type="project" value="TreeGrafter"/>
</dbReference>
<dbReference type="CDD" id="cd21029">
    <property type="entry name" value="IgC1_CD1"/>
    <property type="match status" value="1"/>
</dbReference>
<dbReference type="FunFam" id="2.60.40.10:FF:000254">
    <property type="entry name" value="Antigen-presenting glycoprotein CD1d1"/>
    <property type="match status" value="1"/>
</dbReference>
<dbReference type="FunFam" id="3.30.500.10:FF:000002">
    <property type="entry name" value="Antigen-presenting glycoprotein CD1d1"/>
    <property type="match status" value="1"/>
</dbReference>
<dbReference type="Gene3D" id="2.60.40.10">
    <property type="entry name" value="Immunoglobulins"/>
    <property type="match status" value="1"/>
</dbReference>
<dbReference type="Gene3D" id="3.30.500.10">
    <property type="entry name" value="MHC class I-like antigen recognition-like"/>
    <property type="match status" value="1"/>
</dbReference>
<dbReference type="InterPro" id="IPR007110">
    <property type="entry name" value="Ig-like_dom"/>
</dbReference>
<dbReference type="InterPro" id="IPR036179">
    <property type="entry name" value="Ig-like_dom_sf"/>
</dbReference>
<dbReference type="InterPro" id="IPR013783">
    <property type="entry name" value="Ig-like_fold"/>
</dbReference>
<dbReference type="InterPro" id="IPR003597">
    <property type="entry name" value="Ig_C1-set"/>
</dbReference>
<dbReference type="InterPro" id="IPR050208">
    <property type="entry name" value="MHC_class-I_related"/>
</dbReference>
<dbReference type="InterPro" id="IPR011161">
    <property type="entry name" value="MHC_I-like_Ag-recog"/>
</dbReference>
<dbReference type="InterPro" id="IPR037055">
    <property type="entry name" value="MHC_I-like_Ag-recog_sf"/>
</dbReference>
<dbReference type="InterPro" id="IPR011162">
    <property type="entry name" value="MHC_I/II-like_Ag-recog"/>
</dbReference>
<dbReference type="PANTHER" id="PTHR16675">
    <property type="entry name" value="MHC CLASS I-RELATED"/>
    <property type="match status" value="1"/>
</dbReference>
<dbReference type="PANTHER" id="PTHR16675:SF130">
    <property type="entry name" value="T-CELL SURFACE GLYCOPROTEIN CD1B"/>
    <property type="match status" value="1"/>
</dbReference>
<dbReference type="Pfam" id="PF07654">
    <property type="entry name" value="C1-set"/>
    <property type="match status" value="1"/>
</dbReference>
<dbReference type="Pfam" id="PF16497">
    <property type="entry name" value="MHC_I_3"/>
    <property type="match status" value="1"/>
</dbReference>
<dbReference type="SMART" id="SM00407">
    <property type="entry name" value="IGc1"/>
    <property type="match status" value="1"/>
</dbReference>
<dbReference type="SUPFAM" id="SSF48726">
    <property type="entry name" value="Immunoglobulin"/>
    <property type="match status" value="1"/>
</dbReference>
<dbReference type="SUPFAM" id="SSF54452">
    <property type="entry name" value="MHC antigen-recognition domain"/>
    <property type="match status" value="1"/>
</dbReference>
<dbReference type="PROSITE" id="PS50835">
    <property type="entry name" value="IG_LIKE"/>
    <property type="match status" value="1"/>
</dbReference>
<organism>
    <name type="scientific">Cavia porcellus</name>
    <name type="common">Guinea pig</name>
    <dbReference type="NCBI Taxonomy" id="10141"/>
    <lineage>
        <taxon>Eukaryota</taxon>
        <taxon>Metazoa</taxon>
        <taxon>Chordata</taxon>
        <taxon>Craniata</taxon>
        <taxon>Vertebrata</taxon>
        <taxon>Euteleostomi</taxon>
        <taxon>Mammalia</taxon>
        <taxon>Eutheria</taxon>
        <taxon>Euarchontoglires</taxon>
        <taxon>Glires</taxon>
        <taxon>Rodentia</taxon>
        <taxon>Hystricomorpha</taxon>
        <taxon>Caviidae</taxon>
        <taxon>Cavia</taxon>
    </lineage>
</organism>
<gene>
    <name type="primary">CD1B2</name>
</gene>
<sequence length="332" mass="37384">MLLLVLALLAVLFPAGDTQDAFPEPISYYVTQSSSFFNSTWAQNQASGWLGDIQIDGWNSDSGTIIFRKTWSKGNFSNDEILEMEELFRLYFLGFVKEVQELVSDFQLEYPFEIQGIAGCELHSGGAIVSFLMGAIEGLHFMSINNYSCLPAPEGGTRAQKFCALILQYKGICDIVENLLTKVCPRYLMSVLEAGKAALQKHVKPEAWLSQGPSPEPGYLQLVCHVSGFYPKPVWVMWMRGEQEQPETQRGDVLPNPDDTWYLRATLDVVAKEATGLSCRVKHSSLGGQDIILYWGNSSIGWIILAVFVSCLIVLLFYVLWFYKHWSYQDIL</sequence>
<evidence type="ECO:0000250" key="1"/>
<evidence type="ECO:0000255" key="2"/>
<evidence type="ECO:0000255" key="3">
    <source>
        <dbReference type="PROSITE-ProRule" id="PRU00114"/>
    </source>
</evidence>
<feature type="signal peptide" evidence="2">
    <location>
        <begin position="1"/>
        <end position="17"/>
    </location>
</feature>
<feature type="chain" id="PRO_0000014584" description="T-cell surface glycoprotein CD1b2">
    <location>
        <begin position="18"/>
        <end position="332"/>
    </location>
</feature>
<feature type="topological domain" description="Extracellular" evidence="2">
    <location>
        <begin position="18"/>
        <end position="301"/>
    </location>
</feature>
<feature type="transmembrane region" description="Helical" evidence="2">
    <location>
        <begin position="302"/>
        <end position="322"/>
    </location>
</feature>
<feature type="topological domain" description="Cytoplasmic" evidence="2">
    <location>
        <begin position="323"/>
        <end position="332"/>
    </location>
</feature>
<feature type="domain" description="Ig-like">
    <location>
        <begin position="185"/>
        <end position="295"/>
    </location>
</feature>
<feature type="short sequence motif" description="Internalization signal" evidence="1">
    <location>
        <begin position="328"/>
        <end position="331"/>
    </location>
</feature>
<feature type="glycosylation site" description="N-linked (GlcNAc...) asparagine" evidence="2">
    <location>
        <position position="38"/>
    </location>
</feature>
<feature type="glycosylation site" description="N-linked (GlcNAc...) asparagine" evidence="2">
    <location>
        <position position="75"/>
    </location>
</feature>
<feature type="glycosylation site" description="N-linked (GlcNAc...) asparagine" evidence="2">
    <location>
        <position position="146"/>
    </location>
</feature>
<feature type="glycosylation site" description="N-linked (GlcNAc...) asparagine" evidence="2">
    <location>
        <position position="297"/>
    </location>
</feature>
<feature type="disulfide bond" evidence="3">
    <location>
        <begin position="120"/>
        <end position="184"/>
    </location>
</feature>
<feature type="disulfide bond" evidence="3">
    <location>
        <begin position="149"/>
        <end position="163"/>
    </location>
</feature>
<feature type="disulfide bond" evidence="3">
    <location>
        <begin position="224"/>
        <end position="279"/>
    </location>
</feature>
<reference key="1">
    <citation type="journal article" date="1999" name="J. Immunol.">
        <title>Conservation of a CD1 multigene family in the guinea pig.</title>
        <authorList>
            <person name="Dascher C.C."/>
            <person name="Hiromatsu K."/>
            <person name="Naylor J.W."/>
            <person name="Brauer P.P."/>
            <person name="Brown K.A."/>
            <person name="Storey J.R."/>
            <person name="Behar S.M."/>
            <person name="Kawasaki E.S."/>
            <person name="Porcelli S.A."/>
            <person name="Brenner M.B."/>
            <person name="LeClair K.P."/>
        </authorList>
    </citation>
    <scope>NUCLEOTIDE SEQUENCE [MRNA]</scope>
    <source>
        <strain>Hartley</strain>
        <strain>NIH 2</strain>
        <tissue>Thymus</tissue>
    </source>
</reference>
<proteinExistence type="evidence at transcript level"/>
<protein>
    <recommendedName>
        <fullName>T-cell surface glycoprotein CD1b2</fullName>
    </recommendedName>
    <cdAntigenName>CD1b-2</cdAntigenName>
</protein>
<comment type="function">
    <text evidence="1">Antigen-presenting protein that binds self and non-self lipid and glycolipid antigens and presents them to T-cell receptors on natural killer T-cells.</text>
</comment>
<comment type="subunit">
    <text evidence="1">Heterodimer with B2M (beta-2-microglobulin). Interacts with saposin C (By similarity).</text>
</comment>
<comment type="subcellular location">
    <subcellularLocation>
        <location evidence="1">Cell membrane</location>
        <topology evidence="1">Single-pass type I membrane protein</topology>
    </subcellularLocation>
    <subcellularLocation>
        <location evidence="1">Endosome membrane</location>
    </subcellularLocation>
    <subcellularLocation>
        <location evidence="1">Lysosome membrane</location>
    </subcellularLocation>
    <text evidence="1">Subject to intracellular trafficking between the cell membrane, endosomes and lysosomes. Localizes to cell surface lipid rafts (By similarity).</text>
</comment>
<comment type="miscellaneous">
    <text evidence="1">During protein synthesis and maturation, CD1 family members bind endogenous lipids that are replaced by lipid or glycolipid antigens when the proteins are internalized and pass through endosomes or lysosomes, before trafficking back to the cell surface. Interaction with saposin C is required for the loading of bacterial lipid antigens onto CD1B in the lysosome (By similarity).</text>
</comment>
<accession>Q9QZZ1</accession>